<sequence length="158" mass="16909">MSDLTHLDESGRARMVDVGAKDDTLREAVARGEVRMRPETLQRLAAGDMPKGDVLATARIAGIMAAKRAPDLIPLCHPLLLTHVAVDARLDVATSTVQIEATVRTVGKTGVEMEALTAVSVAALTIYDMCKAIDREMQIGAIRLVRKSGGRSGDFVND</sequence>
<keyword id="KW-0456">Lyase</keyword>
<keyword id="KW-0501">Molybdenum cofactor biosynthesis</keyword>
<comment type="function">
    <text evidence="1">Catalyzes the conversion of (8S)-3',8-cyclo-7,8-dihydroguanosine 5'-triphosphate to cyclic pyranopterin monophosphate (cPMP).</text>
</comment>
<comment type="catalytic activity">
    <reaction evidence="1">
        <text>(8S)-3',8-cyclo-7,8-dihydroguanosine 5'-triphosphate = cyclic pyranopterin phosphate + diphosphate</text>
        <dbReference type="Rhea" id="RHEA:49580"/>
        <dbReference type="ChEBI" id="CHEBI:33019"/>
        <dbReference type="ChEBI" id="CHEBI:59648"/>
        <dbReference type="ChEBI" id="CHEBI:131766"/>
        <dbReference type="EC" id="4.6.1.17"/>
    </reaction>
</comment>
<comment type="pathway">
    <text evidence="1">Cofactor biosynthesis; molybdopterin biosynthesis.</text>
</comment>
<comment type="subunit">
    <text evidence="1">Homohexamer; trimer of dimers.</text>
</comment>
<comment type="similarity">
    <text evidence="1">Belongs to the MoaC family.</text>
</comment>
<organism>
    <name type="scientific">Roseiflexus sp. (strain RS-1)</name>
    <dbReference type="NCBI Taxonomy" id="357808"/>
    <lineage>
        <taxon>Bacteria</taxon>
        <taxon>Bacillati</taxon>
        <taxon>Chloroflexota</taxon>
        <taxon>Chloroflexia</taxon>
        <taxon>Chloroflexales</taxon>
        <taxon>Roseiflexineae</taxon>
        <taxon>Roseiflexaceae</taxon>
        <taxon>Roseiflexus</taxon>
    </lineage>
</organism>
<reference key="1">
    <citation type="submission" date="2007-04" db="EMBL/GenBank/DDBJ databases">
        <title>Complete sequence of Roseiflexus sp. RS-1.</title>
        <authorList>
            <consortium name="US DOE Joint Genome Institute"/>
            <person name="Copeland A."/>
            <person name="Lucas S."/>
            <person name="Lapidus A."/>
            <person name="Barry K."/>
            <person name="Detter J.C."/>
            <person name="Glavina del Rio T."/>
            <person name="Hammon N."/>
            <person name="Israni S."/>
            <person name="Dalin E."/>
            <person name="Tice H."/>
            <person name="Pitluck S."/>
            <person name="Chertkov O."/>
            <person name="Brettin T."/>
            <person name="Bruce D."/>
            <person name="Han C."/>
            <person name="Schmutz J."/>
            <person name="Larimer F."/>
            <person name="Land M."/>
            <person name="Hauser L."/>
            <person name="Kyrpides N."/>
            <person name="Mikhailova N."/>
            <person name="Bryant D.A."/>
            <person name="Richardson P."/>
        </authorList>
    </citation>
    <scope>NUCLEOTIDE SEQUENCE [LARGE SCALE GENOMIC DNA]</scope>
    <source>
        <strain>RS-1</strain>
    </source>
</reference>
<feature type="chain" id="PRO_1000066801" description="Cyclic pyranopterin monophosphate synthase">
    <location>
        <begin position="1"/>
        <end position="158"/>
    </location>
</feature>
<feature type="active site" evidence="1">
    <location>
        <position position="128"/>
    </location>
</feature>
<feature type="binding site" evidence="1">
    <location>
        <begin position="75"/>
        <end position="77"/>
    </location>
    <ligand>
        <name>substrate</name>
    </ligand>
</feature>
<feature type="binding site" evidence="1">
    <location>
        <begin position="113"/>
        <end position="114"/>
    </location>
    <ligand>
        <name>substrate</name>
    </ligand>
</feature>
<evidence type="ECO:0000255" key="1">
    <source>
        <dbReference type="HAMAP-Rule" id="MF_01224"/>
    </source>
</evidence>
<name>MOAC_ROSS1</name>
<protein>
    <recommendedName>
        <fullName evidence="1">Cyclic pyranopterin monophosphate synthase</fullName>
        <ecNumber evidence="1">4.6.1.17</ecNumber>
    </recommendedName>
    <alternativeName>
        <fullName evidence="1">Molybdenum cofactor biosynthesis protein C</fullName>
    </alternativeName>
</protein>
<proteinExistence type="inferred from homology"/>
<dbReference type="EC" id="4.6.1.17" evidence="1"/>
<dbReference type="EMBL" id="CP000686">
    <property type="protein sequence ID" value="ABQ88965.1"/>
    <property type="molecule type" value="Genomic_DNA"/>
</dbReference>
<dbReference type="RefSeq" id="WP_011955321.1">
    <property type="nucleotide sequence ID" value="NC_009523.1"/>
</dbReference>
<dbReference type="SMR" id="A5UQR2"/>
<dbReference type="STRING" id="357808.RoseRS_0543"/>
<dbReference type="KEGG" id="rrs:RoseRS_0543"/>
<dbReference type="eggNOG" id="COG0315">
    <property type="taxonomic scope" value="Bacteria"/>
</dbReference>
<dbReference type="HOGENOM" id="CLU_074693_1_0_0"/>
<dbReference type="OrthoDB" id="9794429at2"/>
<dbReference type="UniPathway" id="UPA00344"/>
<dbReference type="Proteomes" id="UP000006554">
    <property type="component" value="Chromosome"/>
</dbReference>
<dbReference type="GO" id="GO:0061799">
    <property type="term" value="F:cyclic pyranopterin monophosphate synthase activity"/>
    <property type="evidence" value="ECO:0007669"/>
    <property type="project" value="UniProtKB-UniRule"/>
</dbReference>
<dbReference type="GO" id="GO:0006777">
    <property type="term" value="P:Mo-molybdopterin cofactor biosynthetic process"/>
    <property type="evidence" value="ECO:0007669"/>
    <property type="project" value="UniProtKB-UniRule"/>
</dbReference>
<dbReference type="CDD" id="cd01420">
    <property type="entry name" value="MoaC_PE"/>
    <property type="match status" value="1"/>
</dbReference>
<dbReference type="FunFam" id="3.30.70.640:FF:000001">
    <property type="entry name" value="Cyclic pyranopterin monophosphate synthase"/>
    <property type="match status" value="1"/>
</dbReference>
<dbReference type="Gene3D" id="3.30.70.640">
    <property type="entry name" value="Molybdopterin cofactor biosynthesis C (MoaC) domain"/>
    <property type="match status" value="1"/>
</dbReference>
<dbReference type="HAMAP" id="MF_01224_B">
    <property type="entry name" value="MoaC_B"/>
    <property type="match status" value="1"/>
</dbReference>
<dbReference type="InterPro" id="IPR023045">
    <property type="entry name" value="MoaC"/>
</dbReference>
<dbReference type="InterPro" id="IPR047594">
    <property type="entry name" value="MoaC_bact/euk"/>
</dbReference>
<dbReference type="InterPro" id="IPR036522">
    <property type="entry name" value="MoaC_sf"/>
</dbReference>
<dbReference type="InterPro" id="IPR050105">
    <property type="entry name" value="MoCo_biosynth_MoaA/MoaC"/>
</dbReference>
<dbReference type="InterPro" id="IPR002820">
    <property type="entry name" value="Mopterin_CF_biosynth-C_dom"/>
</dbReference>
<dbReference type="NCBIfam" id="TIGR00581">
    <property type="entry name" value="moaC"/>
    <property type="match status" value="1"/>
</dbReference>
<dbReference type="NCBIfam" id="NF006870">
    <property type="entry name" value="PRK09364.1"/>
    <property type="match status" value="1"/>
</dbReference>
<dbReference type="PANTHER" id="PTHR22960:SF29">
    <property type="entry name" value="CYCLIC PYRANOPTERIN MONOPHOSPHATE SYNTHASE"/>
    <property type="match status" value="1"/>
</dbReference>
<dbReference type="PANTHER" id="PTHR22960">
    <property type="entry name" value="MOLYBDOPTERIN COFACTOR SYNTHESIS PROTEIN A"/>
    <property type="match status" value="1"/>
</dbReference>
<dbReference type="Pfam" id="PF01967">
    <property type="entry name" value="MoaC"/>
    <property type="match status" value="1"/>
</dbReference>
<dbReference type="SUPFAM" id="SSF55040">
    <property type="entry name" value="Molybdenum cofactor biosynthesis protein C, MoaC"/>
    <property type="match status" value="1"/>
</dbReference>
<gene>
    <name evidence="1" type="primary">moaC</name>
    <name type="ordered locus">RoseRS_0543</name>
</gene>
<accession>A5UQR2</accession>